<protein>
    <recommendedName>
        <fullName evidence="1">UPF0283 membrane protein mlr0776</fullName>
    </recommendedName>
</protein>
<gene>
    <name type="ordered locus">mlr0776</name>
</gene>
<name>Y776_RHILO</name>
<organism>
    <name type="scientific">Mesorhizobium japonicum (strain LMG 29417 / CECT 9101 / MAFF 303099)</name>
    <name type="common">Mesorhizobium loti (strain MAFF 303099)</name>
    <dbReference type="NCBI Taxonomy" id="266835"/>
    <lineage>
        <taxon>Bacteria</taxon>
        <taxon>Pseudomonadati</taxon>
        <taxon>Pseudomonadota</taxon>
        <taxon>Alphaproteobacteria</taxon>
        <taxon>Hyphomicrobiales</taxon>
        <taxon>Phyllobacteriaceae</taxon>
        <taxon>Mesorhizobium</taxon>
    </lineage>
</organism>
<dbReference type="EMBL" id="BA000012">
    <property type="protein sequence ID" value="BAB48295.1"/>
    <property type="molecule type" value="Genomic_DNA"/>
</dbReference>
<dbReference type="RefSeq" id="WP_010909650.1">
    <property type="nucleotide sequence ID" value="NC_002678.2"/>
</dbReference>
<dbReference type="KEGG" id="mlo:mlr0776"/>
<dbReference type="PATRIC" id="fig|266835.9.peg.621"/>
<dbReference type="eggNOG" id="COG3768">
    <property type="taxonomic scope" value="Bacteria"/>
</dbReference>
<dbReference type="HOGENOM" id="CLU_057693_1_0_5"/>
<dbReference type="Proteomes" id="UP000000552">
    <property type="component" value="Chromosome"/>
</dbReference>
<dbReference type="GO" id="GO:0005886">
    <property type="term" value="C:plasma membrane"/>
    <property type="evidence" value="ECO:0007669"/>
    <property type="project" value="UniProtKB-SubCell"/>
</dbReference>
<dbReference type="HAMAP" id="MF_01085">
    <property type="entry name" value="UPF0283"/>
    <property type="match status" value="1"/>
</dbReference>
<dbReference type="InterPro" id="IPR021147">
    <property type="entry name" value="DUF697"/>
</dbReference>
<dbReference type="InterPro" id="IPR006507">
    <property type="entry name" value="UPF0283"/>
</dbReference>
<dbReference type="NCBIfam" id="TIGR01620">
    <property type="entry name" value="hyp_HI0043"/>
    <property type="match status" value="1"/>
</dbReference>
<dbReference type="PANTHER" id="PTHR39342">
    <property type="entry name" value="UPF0283 MEMBRANE PROTEIN YCJF"/>
    <property type="match status" value="1"/>
</dbReference>
<dbReference type="PANTHER" id="PTHR39342:SF1">
    <property type="entry name" value="UPF0283 MEMBRANE PROTEIN YCJF"/>
    <property type="match status" value="1"/>
</dbReference>
<dbReference type="Pfam" id="PF05128">
    <property type="entry name" value="DUF697"/>
    <property type="match status" value="1"/>
</dbReference>
<reference key="1">
    <citation type="journal article" date="2000" name="DNA Res.">
        <title>Complete genome structure of the nitrogen-fixing symbiotic bacterium Mesorhizobium loti.</title>
        <authorList>
            <person name="Kaneko T."/>
            <person name="Nakamura Y."/>
            <person name="Sato S."/>
            <person name="Asamizu E."/>
            <person name="Kato T."/>
            <person name="Sasamoto S."/>
            <person name="Watanabe A."/>
            <person name="Idesawa K."/>
            <person name="Ishikawa A."/>
            <person name="Kawashima K."/>
            <person name="Kimura T."/>
            <person name="Kishida Y."/>
            <person name="Kiyokawa C."/>
            <person name="Kohara M."/>
            <person name="Matsumoto M."/>
            <person name="Matsuno A."/>
            <person name="Mochizuki Y."/>
            <person name="Nakayama S."/>
            <person name="Nakazaki N."/>
            <person name="Shimpo S."/>
            <person name="Sugimoto M."/>
            <person name="Takeuchi C."/>
            <person name="Yamada M."/>
            <person name="Tabata S."/>
        </authorList>
    </citation>
    <scope>NUCLEOTIDE SEQUENCE [LARGE SCALE GENOMIC DNA]</scope>
    <source>
        <strain>LMG 29417 / CECT 9101 / MAFF 303099</strain>
    </source>
</reference>
<accession>Q98M18</accession>
<comment type="subcellular location">
    <subcellularLocation>
        <location evidence="1">Cell inner membrane</location>
        <topology evidence="1">Multi-pass membrane protein</topology>
    </subcellularLocation>
</comment>
<comment type="similarity">
    <text evidence="1">Belongs to the UPF0283 family.</text>
</comment>
<keyword id="KW-0997">Cell inner membrane</keyword>
<keyword id="KW-1003">Cell membrane</keyword>
<keyword id="KW-0472">Membrane</keyword>
<keyword id="KW-0812">Transmembrane</keyword>
<keyword id="KW-1133">Transmembrane helix</keyword>
<proteinExistence type="inferred from homology"/>
<sequence>MTAPRKPAAFRIEPEAAPTQETPKARQAELSRKPRGLKTDVALVIPAEVDVFDEPDIVAAEPPPAAAPRKRSLFGSIFFGAIGVLVSLAVGLWTDQLIRDLFARAEWLGWLAAGMAAIAVLALVVILIREFLAIARLAEVEKLQKRALDAIARDDPKAARSVVDELSAFVAAKPETAAGRRALAELRGEIIDGGNLVRLAEAEILGPLDARAKVMILEAAKRVSLVTAVSPRALVDVAYVVFEAGRLIRRLSELYGGRPGTLGFFRLARSVLAHLAVTGSIAVGDSFVQQIVGHGLAARLSAKLGEGVVNGMMTARIGIAAMETARPLPFSAAKRPGLGDFLSALTSFAAKKDTETTGSGK</sequence>
<feature type="chain" id="PRO_0000214180" description="UPF0283 membrane protein mlr0776">
    <location>
        <begin position="1"/>
        <end position="361"/>
    </location>
</feature>
<feature type="transmembrane region" description="Helical" evidence="1">
    <location>
        <begin position="73"/>
        <end position="93"/>
    </location>
</feature>
<feature type="transmembrane region" description="Helical" evidence="1">
    <location>
        <begin position="108"/>
        <end position="128"/>
    </location>
</feature>
<feature type="region of interest" description="Disordered" evidence="2">
    <location>
        <begin position="1"/>
        <end position="33"/>
    </location>
</feature>
<feature type="compositionally biased region" description="Basic and acidic residues" evidence="2">
    <location>
        <begin position="23"/>
        <end position="32"/>
    </location>
</feature>
<evidence type="ECO:0000255" key="1">
    <source>
        <dbReference type="HAMAP-Rule" id="MF_01085"/>
    </source>
</evidence>
<evidence type="ECO:0000256" key="2">
    <source>
        <dbReference type="SAM" id="MobiDB-lite"/>
    </source>
</evidence>